<name>DAPD_SHISS</name>
<organism>
    <name type="scientific">Shigella sonnei (strain Ss046)</name>
    <dbReference type="NCBI Taxonomy" id="300269"/>
    <lineage>
        <taxon>Bacteria</taxon>
        <taxon>Pseudomonadati</taxon>
        <taxon>Pseudomonadota</taxon>
        <taxon>Gammaproteobacteria</taxon>
        <taxon>Enterobacterales</taxon>
        <taxon>Enterobacteriaceae</taxon>
        <taxon>Shigella</taxon>
    </lineage>
</organism>
<accession>Q3Z5J2</accession>
<sequence>MQQLQNIIETAFERRAEITPANADTVTREAVNQVIALLDSGALRVAEKIDGQWVTHQWLKKAVLLSFRINDNQVIEGAESRYFDKVPMKFADYDEARFQKEGFRVVPPAAVRQGAFIARNTVLMPSYVNIGAYVDEGTMVDTWATVGSCAQIGKNVHLSGGVGIGGVLEPLQANPTIIEDNCFIGARSEVVEGVIVEEGSVISMGVYIGQSTRIYDRETGEIHYGRVPAGSVVVSGNLPSKDGKYSLYCAVIVKKVDAKTRGKVGINELLRTID</sequence>
<evidence type="ECO:0000255" key="1">
    <source>
        <dbReference type="HAMAP-Rule" id="MF_00811"/>
    </source>
</evidence>
<dbReference type="EC" id="2.3.1.117" evidence="1"/>
<dbReference type="EMBL" id="CP000038">
    <property type="protein sequence ID" value="AAZ86970.1"/>
    <property type="molecule type" value="Genomic_DNA"/>
</dbReference>
<dbReference type="RefSeq" id="WP_001186650.1">
    <property type="nucleotide sequence ID" value="NC_007384.1"/>
</dbReference>
<dbReference type="SMR" id="Q3Z5J2"/>
<dbReference type="GeneID" id="93777259"/>
<dbReference type="KEGG" id="ssn:SSON_0178"/>
<dbReference type="HOGENOM" id="CLU_050859_0_1_6"/>
<dbReference type="UniPathway" id="UPA00034">
    <property type="reaction ID" value="UER00019"/>
</dbReference>
<dbReference type="Proteomes" id="UP000002529">
    <property type="component" value="Chromosome"/>
</dbReference>
<dbReference type="GO" id="GO:0005737">
    <property type="term" value="C:cytoplasm"/>
    <property type="evidence" value="ECO:0007669"/>
    <property type="project" value="UniProtKB-SubCell"/>
</dbReference>
<dbReference type="GO" id="GO:0008666">
    <property type="term" value="F:2,3,4,5-tetrahydropyridine-2,6-dicarboxylate N-succinyltransferase activity"/>
    <property type="evidence" value="ECO:0007669"/>
    <property type="project" value="UniProtKB-UniRule"/>
</dbReference>
<dbReference type="GO" id="GO:0016779">
    <property type="term" value="F:nucleotidyltransferase activity"/>
    <property type="evidence" value="ECO:0007669"/>
    <property type="project" value="TreeGrafter"/>
</dbReference>
<dbReference type="GO" id="GO:0019877">
    <property type="term" value="P:diaminopimelate biosynthetic process"/>
    <property type="evidence" value="ECO:0007669"/>
    <property type="project" value="UniProtKB-UniRule"/>
</dbReference>
<dbReference type="GO" id="GO:0009089">
    <property type="term" value="P:lysine biosynthetic process via diaminopimelate"/>
    <property type="evidence" value="ECO:0007669"/>
    <property type="project" value="UniProtKB-UniRule"/>
</dbReference>
<dbReference type="CDD" id="cd03350">
    <property type="entry name" value="LbH_THP_succinylT"/>
    <property type="match status" value="1"/>
</dbReference>
<dbReference type="FunFam" id="1.10.166.10:FF:000001">
    <property type="entry name" value="2,3,4,5-tetrahydropyridine-2,6-dicarboxylate N-succinyltransferase"/>
    <property type="match status" value="1"/>
</dbReference>
<dbReference type="FunFam" id="2.160.10.10:FF:000004">
    <property type="entry name" value="2,3,4,5-tetrahydropyridine-2,6-dicarboxylate N-succinyltransferase"/>
    <property type="match status" value="1"/>
</dbReference>
<dbReference type="Gene3D" id="2.160.10.10">
    <property type="entry name" value="Hexapeptide repeat proteins"/>
    <property type="match status" value="1"/>
</dbReference>
<dbReference type="Gene3D" id="1.10.166.10">
    <property type="entry name" value="Tetrahydrodipicolinate-N-succinyltransferase, N-terminal domain"/>
    <property type="match status" value="1"/>
</dbReference>
<dbReference type="HAMAP" id="MF_00811">
    <property type="entry name" value="DapD"/>
    <property type="match status" value="1"/>
</dbReference>
<dbReference type="InterPro" id="IPR005664">
    <property type="entry name" value="DapD_Trfase_Hexpep_rpt_fam"/>
</dbReference>
<dbReference type="InterPro" id="IPR001451">
    <property type="entry name" value="Hexapep"/>
</dbReference>
<dbReference type="InterPro" id="IPR018357">
    <property type="entry name" value="Hexapep_transf_CS"/>
</dbReference>
<dbReference type="InterPro" id="IPR023180">
    <property type="entry name" value="THP_succinylTrfase_dom1"/>
</dbReference>
<dbReference type="InterPro" id="IPR037133">
    <property type="entry name" value="THP_succinylTrfase_N_sf"/>
</dbReference>
<dbReference type="InterPro" id="IPR011004">
    <property type="entry name" value="Trimer_LpxA-like_sf"/>
</dbReference>
<dbReference type="NCBIfam" id="TIGR00965">
    <property type="entry name" value="dapD"/>
    <property type="match status" value="1"/>
</dbReference>
<dbReference type="NCBIfam" id="NF008808">
    <property type="entry name" value="PRK11830.1"/>
    <property type="match status" value="1"/>
</dbReference>
<dbReference type="PANTHER" id="PTHR19136:SF52">
    <property type="entry name" value="2,3,4,5-TETRAHYDROPYRIDINE-2,6-DICARBOXYLATE N-SUCCINYLTRANSFERASE"/>
    <property type="match status" value="1"/>
</dbReference>
<dbReference type="PANTHER" id="PTHR19136">
    <property type="entry name" value="MOLYBDENUM COFACTOR GUANYLYLTRANSFERASE"/>
    <property type="match status" value="1"/>
</dbReference>
<dbReference type="Pfam" id="PF14602">
    <property type="entry name" value="Hexapep_2"/>
    <property type="match status" value="1"/>
</dbReference>
<dbReference type="Pfam" id="PF14805">
    <property type="entry name" value="THDPS_N_2"/>
    <property type="match status" value="1"/>
</dbReference>
<dbReference type="SUPFAM" id="SSF51161">
    <property type="entry name" value="Trimeric LpxA-like enzymes"/>
    <property type="match status" value="1"/>
</dbReference>
<dbReference type="PROSITE" id="PS00101">
    <property type="entry name" value="HEXAPEP_TRANSFERASES"/>
    <property type="match status" value="1"/>
</dbReference>
<gene>
    <name evidence="1" type="primary">dapD</name>
    <name type="ordered locus">SSON_0178</name>
</gene>
<feature type="chain" id="PRO_1000047194" description="2,3,4,5-tetrahydropyridine-2,6-dicarboxylate N-succinyltransferase">
    <location>
        <begin position="1"/>
        <end position="274"/>
    </location>
</feature>
<feature type="binding site" evidence="1">
    <location>
        <position position="104"/>
    </location>
    <ligand>
        <name>substrate</name>
    </ligand>
</feature>
<feature type="binding site" evidence="1">
    <location>
        <position position="141"/>
    </location>
    <ligand>
        <name>substrate</name>
    </ligand>
</feature>
<keyword id="KW-0012">Acyltransferase</keyword>
<keyword id="KW-0028">Amino-acid biosynthesis</keyword>
<keyword id="KW-0963">Cytoplasm</keyword>
<keyword id="KW-0220">Diaminopimelate biosynthesis</keyword>
<keyword id="KW-0457">Lysine biosynthesis</keyword>
<keyword id="KW-1185">Reference proteome</keyword>
<keyword id="KW-0677">Repeat</keyword>
<keyword id="KW-0808">Transferase</keyword>
<proteinExistence type="inferred from homology"/>
<protein>
    <recommendedName>
        <fullName evidence="1">2,3,4,5-tetrahydropyridine-2,6-dicarboxylate N-succinyltransferase</fullName>
        <ecNumber evidence="1">2.3.1.117</ecNumber>
    </recommendedName>
    <alternativeName>
        <fullName evidence="1">Tetrahydrodipicolinate N-succinyltransferase</fullName>
        <shortName evidence="1">THDP succinyltransferase</shortName>
        <shortName evidence="1">THP succinyltransferase</shortName>
        <shortName evidence="1">Tetrahydropicolinate succinylase</shortName>
    </alternativeName>
</protein>
<reference key="1">
    <citation type="journal article" date="2005" name="Nucleic Acids Res.">
        <title>Genome dynamics and diversity of Shigella species, the etiologic agents of bacillary dysentery.</title>
        <authorList>
            <person name="Yang F."/>
            <person name="Yang J."/>
            <person name="Zhang X."/>
            <person name="Chen L."/>
            <person name="Jiang Y."/>
            <person name="Yan Y."/>
            <person name="Tang X."/>
            <person name="Wang J."/>
            <person name="Xiong Z."/>
            <person name="Dong J."/>
            <person name="Xue Y."/>
            <person name="Zhu Y."/>
            <person name="Xu X."/>
            <person name="Sun L."/>
            <person name="Chen S."/>
            <person name="Nie H."/>
            <person name="Peng J."/>
            <person name="Xu J."/>
            <person name="Wang Y."/>
            <person name="Yuan Z."/>
            <person name="Wen Y."/>
            <person name="Yao Z."/>
            <person name="Shen Y."/>
            <person name="Qiang B."/>
            <person name="Hou Y."/>
            <person name="Yu J."/>
            <person name="Jin Q."/>
        </authorList>
    </citation>
    <scope>NUCLEOTIDE SEQUENCE [LARGE SCALE GENOMIC DNA]</scope>
    <source>
        <strain>Ss046</strain>
    </source>
</reference>
<comment type="catalytic activity">
    <reaction evidence="1">
        <text>(S)-2,3,4,5-tetrahydrodipicolinate + succinyl-CoA + H2O = (S)-2-succinylamino-6-oxoheptanedioate + CoA</text>
        <dbReference type="Rhea" id="RHEA:17325"/>
        <dbReference type="ChEBI" id="CHEBI:15377"/>
        <dbReference type="ChEBI" id="CHEBI:15685"/>
        <dbReference type="ChEBI" id="CHEBI:16845"/>
        <dbReference type="ChEBI" id="CHEBI:57287"/>
        <dbReference type="ChEBI" id="CHEBI:57292"/>
        <dbReference type="EC" id="2.3.1.117"/>
    </reaction>
</comment>
<comment type="pathway">
    <text evidence="1">Amino-acid biosynthesis; L-lysine biosynthesis via DAP pathway; LL-2,6-diaminopimelate from (S)-tetrahydrodipicolinate (succinylase route): step 1/3.</text>
</comment>
<comment type="subunit">
    <text evidence="1">Homotrimer.</text>
</comment>
<comment type="subcellular location">
    <subcellularLocation>
        <location evidence="1">Cytoplasm</location>
    </subcellularLocation>
</comment>
<comment type="similarity">
    <text evidence="1">Belongs to the transferase hexapeptide repeat family.</text>
</comment>